<evidence type="ECO:0000255" key="1">
    <source>
        <dbReference type="HAMAP-Rule" id="MF_00720"/>
    </source>
</evidence>
<keyword id="KW-0235">DNA replication</keyword>
<keyword id="KW-0238">DNA-binding</keyword>
<keyword id="KW-0639">Primosome</keyword>
<organism>
    <name type="scientific">Shewanella putrefaciens (strain CN-32 / ATCC BAA-453)</name>
    <dbReference type="NCBI Taxonomy" id="319224"/>
    <lineage>
        <taxon>Bacteria</taxon>
        <taxon>Pseudomonadati</taxon>
        <taxon>Pseudomonadota</taxon>
        <taxon>Gammaproteobacteria</taxon>
        <taxon>Alteromonadales</taxon>
        <taxon>Shewanellaceae</taxon>
        <taxon>Shewanella</taxon>
    </lineage>
</organism>
<feature type="chain" id="PRO_1000083296" description="Replication restart protein PriB">
    <location>
        <begin position="1"/>
        <end position="101"/>
    </location>
</feature>
<feature type="domain" description="SSB" evidence="1">
    <location>
        <begin position="1"/>
        <end position="101"/>
    </location>
</feature>
<gene>
    <name evidence="1" type="primary">priB</name>
    <name type="ordered locus">Sputcn32_0754</name>
</gene>
<protein>
    <recommendedName>
        <fullName evidence="1">Replication restart protein PriB</fullName>
    </recommendedName>
</protein>
<accession>A4Y3F1</accession>
<sequence>MTTNSLVLSGTITRSRRFKSPAGIAHSVIMLEHKSQRYEADMLRNVYVQIQVILSGPRFESVADNLKAGVEVQVQGFMTLQQGRNGQNRLVIHAENVELKT</sequence>
<reference key="1">
    <citation type="submission" date="2007-04" db="EMBL/GenBank/DDBJ databases">
        <title>Complete sequence of Shewanella putrefaciens CN-32.</title>
        <authorList>
            <consortium name="US DOE Joint Genome Institute"/>
            <person name="Copeland A."/>
            <person name="Lucas S."/>
            <person name="Lapidus A."/>
            <person name="Barry K."/>
            <person name="Detter J.C."/>
            <person name="Glavina del Rio T."/>
            <person name="Hammon N."/>
            <person name="Israni S."/>
            <person name="Dalin E."/>
            <person name="Tice H."/>
            <person name="Pitluck S."/>
            <person name="Chain P."/>
            <person name="Malfatti S."/>
            <person name="Shin M."/>
            <person name="Vergez L."/>
            <person name="Schmutz J."/>
            <person name="Larimer F."/>
            <person name="Land M."/>
            <person name="Hauser L."/>
            <person name="Kyrpides N."/>
            <person name="Mikhailova N."/>
            <person name="Romine M.F."/>
            <person name="Fredrickson J."/>
            <person name="Tiedje J."/>
            <person name="Richardson P."/>
        </authorList>
    </citation>
    <scope>NUCLEOTIDE SEQUENCE [LARGE SCALE GENOMIC DNA]</scope>
    <source>
        <strain>CN-32 / ATCC BAA-453</strain>
    </source>
</reference>
<proteinExistence type="inferred from homology"/>
<name>PRIB_SHEPC</name>
<dbReference type="EMBL" id="CP000681">
    <property type="protein sequence ID" value="ABP74484.1"/>
    <property type="molecule type" value="Genomic_DNA"/>
</dbReference>
<dbReference type="SMR" id="A4Y3F1"/>
<dbReference type="STRING" id="319224.Sputcn32_0754"/>
<dbReference type="KEGG" id="spc:Sputcn32_0754"/>
<dbReference type="eggNOG" id="COG2965">
    <property type="taxonomic scope" value="Bacteria"/>
</dbReference>
<dbReference type="HOGENOM" id="CLU_166075_0_0_6"/>
<dbReference type="GO" id="GO:1990077">
    <property type="term" value="C:primosome complex"/>
    <property type="evidence" value="ECO:0007669"/>
    <property type="project" value="UniProtKB-KW"/>
</dbReference>
<dbReference type="GO" id="GO:0003697">
    <property type="term" value="F:single-stranded DNA binding"/>
    <property type="evidence" value="ECO:0007669"/>
    <property type="project" value="UniProtKB-UniRule"/>
</dbReference>
<dbReference type="GO" id="GO:0006269">
    <property type="term" value="P:DNA replication, synthesis of primer"/>
    <property type="evidence" value="ECO:0007669"/>
    <property type="project" value="UniProtKB-KW"/>
</dbReference>
<dbReference type="Gene3D" id="2.40.50.140">
    <property type="entry name" value="Nucleic acid-binding proteins"/>
    <property type="match status" value="1"/>
</dbReference>
<dbReference type="HAMAP" id="MF_00720">
    <property type="entry name" value="PriB"/>
    <property type="match status" value="1"/>
</dbReference>
<dbReference type="InterPro" id="IPR012340">
    <property type="entry name" value="NA-bd_OB-fold"/>
</dbReference>
<dbReference type="InterPro" id="IPR000424">
    <property type="entry name" value="Primosome_PriB/ssb"/>
</dbReference>
<dbReference type="InterPro" id="IPR023646">
    <property type="entry name" value="Prisomal_replication_PriB"/>
</dbReference>
<dbReference type="NCBIfam" id="TIGR04418">
    <property type="entry name" value="PriB_gamma"/>
    <property type="match status" value="1"/>
</dbReference>
<dbReference type="Pfam" id="PF22657">
    <property type="entry name" value="SSB_1"/>
    <property type="match status" value="1"/>
</dbReference>
<dbReference type="PIRSF" id="PIRSF003135">
    <property type="entry name" value="Primosomal_n"/>
    <property type="match status" value="1"/>
</dbReference>
<dbReference type="SUPFAM" id="SSF50249">
    <property type="entry name" value="Nucleic acid-binding proteins"/>
    <property type="match status" value="1"/>
</dbReference>
<dbReference type="PROSITE" id="PS50935">
    <property type="entry name" value="SSB"/>
    <property type="match status" value="1"/>
</dbReference>
<comment type="function">
    <text evidence="1">Involved in the restart of stalled replication forks, which reloads the replicative helicase on sites other than the origin of replication; the PriA-PriB pathway is the major replication restart pathway. During primosome assembly it facilitates complex formation between PriA and DnaT on DNA; stabilizes PriA on DNA. Stimulates the DNA unwinding activity of PriA helicase.</text>
</comment>
<comment type="subunit">
    <text evidence="1">Homodimer. Interacts with PriA and DnaT. Component of the replication restart primosome. Primosome assembly occurs via a 'hand-off' mechanism. PriA binds to replication forks, subsequently PriB then DnaT bind; DnaT then displaces ssDNA to generate the helicase loading substrate.</text>
</comment>
<comment type="similarity">
    <text evidence="1">Belongs to the PriB family.</text>
</comment>